<dbReference type="EMBL" id="CP001191">
    <property type="protein sequence ID" value="ACI53540.1"/>
    <property type="molecule type" value="Genomic_DNA"/>
</dbReference>
<dbReference type="RefSeq" id="WP_003588677.1">
    <property type="nucleotide sequence ID" value="NC_011369.1"/>
</dbReference>
<dbReference type="STRING" id="395492.Rleg2_0240"/>
<dbReference type="KEGG" id="rlt:Rleg2_0240"/>
<dbReference type="eggNOG" id="COG5328">
    <property type="taxonomic scope" value="Bacteria"/>
</dbReference>
<dbReference type="HOGENOM" id="CLU_112904_0_0_5"/>
<dbReference type="Proteomes" id="UP000008330">
    <property type="component" value="Chromosome"/>
</dbReference>
<dbReference type="HAMAP" id="MF_00678">
    <property type="entry name" value="UPF0262"/>
    <property type="match status" value="1"/>
</dbReference>
<dbReference type="InterPro" id="IPR008321">
    <property type="entry name" value="UCP032146"/>
</dbReference>
<dbReference type="NCBIfam" id="NF002769">
    <property type="entry name" value="PRK02853.1"/>
    <property type="match status" value="1"/>
</dbReference>
<dbReference type="Pfam" id="PF06793">
    <property type="entry name" value="UPF0262"/>
    <property type="match status" value="1"/>
</dbReference>
<dbReference type="PIRSF" id="PIRSF032146">
    <property type="entry name" value="UCP032146"/>
    <property type="match status" value="1"/>
</dbReference>
<keyword id="KW-1185">Reference proteome</keyword>
<protein>
    <recommendedName>
        <fullName evidence="1">UPF0262 protein Rleg2_0240</fullName>
    </recommendedName>
</protein>
<feature type="chain" id="PRO_1000131651" description="UPF0262 protein Rleg2_0240">
    <location>
        <begin position="1"/>
        <end position="157"/>
    </location>
</feature>
<comment type="similarity">
    <text evidence="1">Belongs to the UPF0262 family.</text>
</comment>
<sequence>MAAGDFRLCDVVLDDTIGRSTPDVEHERAVAIFDLIEENSFAPIGHAGGPYRLNISLVDSKLVFAIRTEEGIDVATHILSLTPFRRIVKDYFMICESYYEAIRSATPSRIEAIDMGRRGIHNEGSQTLKDRLTGKIEVDFDTARRLFTLVCVLYWRG</sequence>
<gene>
    <name type="ordered locus">Rleg2_0240</name>
</gene>
<organism>
    <name type="scientific">Rhizobium leguminosarum bv. trifolii (strain WSM2304)</name>
    <dbReference type="NCBI Taxonomy" id="395492"/>
    <lineage>
        <taxon>Bacteria</taxon>
        <taxon>Pseudomonadati</taxon>
        <taxon>Pseudomonadota</taxon>
        <taxon>Alphaproteobacteria</taxon>
        <taxon>Hyphomicrobiales</taxon>
        <taxon>Rhizobiaceae</taxon>
        <taxon>Rhizobium/Agrobacterium group</taxon>
        <taxon>Rhizobium</taxon>
    </lineage>
</organism>
<proteinExistence type="inferred from homology"/>
<name>Y240_RHILW</name>
<evidence type="ECO:0000255" key="1">
    <source>
        <dbReference type="HAMAP-Rule" id="MF_00678"/>
    </source>
</evidence>
<accession>B5ZPM3</accession>
<reference key="1">
    <citation type="journal article" date="2010" name="Stand. Genomic Sci.">
        <title>Complete genome sequence of Rhizobium leguminosarum bv trifolii strain WSM2304, an effective microsymbiont of the South American clover Trifolium polymorphum.</title>
        <authorList>
            <person name="Reeve W."/>
            <person name="O'Hara G."/>
            <person name="Chain P."/>
            <person name="Ardley J."/>
            <person name="Brau L."/>
            <person name="Nandesena K."/>
            <person name="Tiwari R."/>
            <person name="Malfatti S."/>
            <person name="Kiss H."/>
            <person name="Lapidus A."/>
            <person name="Copeland A."/>
            <person name="Nolan M."/>
            <person name="Land M."/>
            <person name="Ivanova N."/>
            <person name="Mavromatis K."/>
            <person name="Markowitz V."/>
            <person name="Kyrpides N."/>
            <person name="Melino V."/>
            <person name="Denton M."/>
            <person name="Yates R."/>
            <person name="Howieson J."/>
        </authorList>
    </citation>
    <scope>NUCLEOTIDE SEQUENCE [LARGE SCALE GENOMIC DNA]</scope>
    <source>
        <strain>WSM2304</strain>
    </source>
</reference>